<gene>
    <name type="primary">ACKR1</name>
    <name type="synonym">DARC</name>
    <name type="synonym">FY</name>
</gene>
<sequence>MGNCLYPVADDNSTKLAIKEDFLIDFPEDYYPDYNETDVEAAAPCHSCSLLNYSSLPFFILVSILGILASGTILYALLRPLFRWQLYQDRSTLVQLAVGSALFSIVVPILARGLSGALITSLCHLAHLVAYGSAFAQALLIGYHACLGPQLGAGQVPGLRLGVTVGLWGVAALLSLPVVLGSDTSQGLCTVTFSGEWETLRYIHAAACFAIFVLLPLGLLGTKGLKTVLGRAPCPWVDVLWVWFIFWWPQGMTLGLDSLVRSKAIVVSTCPAQQALDMLLDVAEALAILHCVATPLLLAWVCYQATHTSPPSLPLPTTQTSHLDTLGGKS</sequence>
<accession>Q9GLX0</accession>
<accession>A5PKF0</accession>
<accession>Q5E941</accession>
<evidence type="ECO:0000250" key="1"/>
<evidence type="ECO:0000255" key="2"/>
<evidence type="ECO:0000305" key="3"/>
<comment type="function">
    <text evidence="1">Atypical chemokine receptor that controls chemokine levels and localization via high-affinity chemokine binding that is uncoupled from classic ligand-driven signal transduction cascades, resulting instead in chemokine sequestration, degradation, or transcytosis. Also known as interceptor (internalizing receptor) or chemokine-scavenging receptor or chemokine decoy receptor. Has a promiscuous chemokine-binding profile, interacting with inflammatory chemokines of both the CXC and the CC subfamilies but not with homeostatic chemokines. Acts as a receptor for chemokines including CCL2, CCL5, CCL7, CCL11, CCL13, CCL14, CCL17, CXCL5, CXCL6, IL8/CXCL8, CXCL11, GRO, RANTES, MCP-1 and TARC. May regulate chemokine bioavailability and, consequently, leukocyte recruitment through two distinct mechanisms: when expressed in endothelial cells, it sustains the abluminal to luminal transcytosis of tissue-derived chemokines and their subsequent presentation to circulating leukocytes; when expressed in erythrocytes, serves as blood reservoir of cognate chemokines but also as a chemokine sink, buffering potential surges in plasma chemokine levels (By similarity).</text>
</comment>
<comment type="subcellular location">
    <subcellularLocation>
        <location evidence="1">Early endosome</location>
    </subcellularLocation>
    <subcellularLocation>
        <location evidence="1">Recycling endosome</location>
    </subcellularLocation>
    <subcellularLocation>
        <location>Membrane</location>
        <topology>Multi-pass membrane protein</topology>
    </subcellularLocation>
    <text evidence="1">Predominantly localizes to endocytic vesicles, and upon stimulation by the ligand is internalized via caveolae. Once internalized, the ligand dissociates from the receptor, and is targeted to degradation while the receptor is recycled back to the cell membrane (By similarity).</text>
</comment>
<comment type="similarity">
    <text evidence="3">Belongs to the G-protein coupled receptor 1 family. Atypical chemokine receptor subfamily.</text>
</comment>
<proteinExistence type="evidence at transcript level"/>
<reference key="1">
    <citation type="submission" date="1998-11" db="EMBL/GenBank/DDBJ databases">
        <title>Bovine DARC gene.</title>
        <authorList>
            <person name="Tournamille C."/>
            <person name="Colin Y."/>
        </authorList>
    </citation>
    <scope>NUCLEOTIDE SEQUENCE [GENOMIC DNA]</scope>
</reference>
<reference key="2">
    <citation type="journal article" date="2005" name="BMC Genomics">
        <title>Characterization of 954 bovine full-CDS cDNA sequences.</title>
        <authorList>
            <person name="Harhay G.P."/>
            <person name="Sonstegard T.S."/>
            <person name="Keele J.W."/>
            <person name="Heaton M.P."/>
            <person name="Clawson M.L."/>
            <person name="Snelling W.M."/>
            <person name="Wiedmann R.T."/>
            <person name="Van Tassell C.P."/>
            <person name="Smith T.P.L."/>
        </authorList>
    </citation>
    <scope>NUCLEOTIDE SEQUENCE [LARGE SCALE MRNA]</scope>
</reference>
<reference key="3">
    <citation type="submission" date="2007-06" db="EMBL/GenBank/DDBJ databases">
        <authorList>
            <consortium name="NIH - Mammalian Gene Collection (MGC) project"/>
        </authorList>
    </citation>
    <scope>NUCLEOTIDE SEQUENCE [LARGE SCALE MRNA]</scope>
    <source>
        <strain>Hereford</strain>
        <tissue>Thymus</tissue>
    </source>
</reference>
<name>ACKR1_BOVIN</name>
<keyword id="KW-1015">Disulfide bond</keyword>
<keyword id="KW-0967">Endosome</keyword>
<keyword id="KW-0297">G-protein coupled receptor</keyword>
<keyword id="KW-0325">Glycoprotein</keyword>
<keyword id="KW-0472">Membrane</keyword>
<keyword id="KW-0675">Receptor</keyword>
<keyword id="KW-1185">Reference proteome</keyword>
<keyword id="KW-0807">Transducer</keyword>
<keyword id="KW-0812">Transmembrane</keyword>
<keyword id="KW-1133">Transmembrane helix</keyword>
<organism>
    <name type="scientific">Bos taurus</name>
    <name type="common">Bovine</name>
    <dbReference type="NCBI Taxonomy" id="9913"/>
    <lineage>
        <taxon>Eukaryota</taxon>
        <taxon>Metazoa</taxon>
        <taxon>Chordata</taxon>
        <taxon>Craniata</taxon>
        <taxon>Vertebrata</taxon>
        <taxon>Euteleostomi</taxon>
        <taxon>Mammalia</taxon>
        <taxon>Eutheria</taxon>
        <taxon>Laurasiatheria</taxon>
        <taxon>Artiodactyla</taxon>
        <taxon>Ruminantia</taxon>
        <taxon>Pecora</taxon>
        <taxon>Bovidae</taxon>
        <taxon>Bovinae</taxon>
        <taxon>Bos</taxon>
    </lineage>
</organism>
<feature type="chain" id="PRO_0000152582" description="Atypical chemokine receptor 1">
    <location>
        <begin position="1"/>
        <end position="330"/>
    </location>
</feature>
<feature type="topological domain" description="Extracellular" evidence="2">
    <location>
        <begin position="1"/>
        <end position="57"/>
    </location>
</feature>
<feature type="transmembrane region" description="Helical; Name=1" evidence="2">
    <location>
        <begin position="58"/>
        <end position="78"/>
    </location>
</feature>
<feature type="topological domain" description="Cytoplasmic" evidence="2">
    <location>
        <begin position="79"/>
        <end position="89"/>
    </location>
</feature>
<feature type="transmembrane region" description="Helical; Name=2" evidence="2">
    <location>
        <begin position="90"/>
        <end position="110"/>
    </location>
</feature>
<feature type="topological domain" description="Extracellular" evidence="2">
    <location>
        <begin position="111"/>
        <end position="123"/>
    </location>
</feature>
<feature type="transmembrane region" description="Helical; Name=3" evidence="2">
    <location>
        <begin position="124"/>
        <end position="147"/>
    </location>
</feature>
<feature type="topological domain" description="Cytoplasmic" evidence="2">
    <location>
        <begin position="148"/>
        <end position="160"/>
    </location>
</feature>
<feature type="transmembrane region" description="Helical; Name=4" evidence="2">
    <location>
        <begin position="161"/>
        <end position="181"/>
    </location>
</feature>
<feature type="topological domain" description="Extracellular" evidence="2">
    <location>
        <begin position="182"/>
        <end position="201"/>
    </location>
</feature>
<feature type="transmembrane region" description="Helical; Name=5" evidence="2">
    <location>
        <begin position="202"/>
        <end position="222"/>
    </location>
</feature>
<feature type="topological domain" description="Cytoplasmic" evidence="2">
    <location>
        <begin position="223"/>
        <end position="238"/>
    </location>
</feature>
<feature type="transmembrane region" description="Helical; Name=6" evidence="2">
    <location>
        <begin position="239"/>
        <end position="259"/>
    </location>
</feature>
<feature type="topological domain" description="Extracellular" evidence="2">
    <location>
        <begin position="260"/>
        <end position="281"/>
    </location>
</feature>
<feature type="transmembrane region" description="Helical; Name=7" evidence="2">
    <location>
        <begin position="282"/>
        <end position="302"/>
    </location>
</feature>
<feature type="topological domain" description="Cytoplasmic" evidence="2">
    <location>
        <begin position="303"/>
        <end position="330"/>
    </location>
</feature>
<feature type="glycosylation site" description="N-linked (GlcNAc...) asparagine" evidence="2">
    <location>
        <position position="12"/>
    </location>
</feature>
<feature type="glycosylation site" description="N-linked (GlcNAc...) asparagine" evidence="2">
    <location>
        <position position="35"/>
    </location>
</feature>
<feature type="glycosylation site" description="N-linked (GlcNAc...) asparagine" evidence="2">
    <location>
        <position position="52"/>
    </location>
</feature>
<feature type="disulfide bond" evidence="1">
    <location>
        <begin position="45"/>
        <end position="270"/>
    </location>
</feature>
<feature type="disulfide bond" evidence="1">
    <location>
        <begin position="123"/>
        <end position="189"/>
    </location>
</feature>
<feature type="sequence conflict" description="In Ref. 1; AAG31021." evidence="3" ref="1">
    <original>Q</original>
    <variation>R</variation>
    <location>
        <position position="150"/>
    </location>
</feature>
<feature type="sequence conflict" description="In Ref. 1; AAG31021." evidence="3" ref="1">
    <original>G</original>
    <variation>S</variation>
    <location>
        <position position="328"/>
    </location>
</feature>
<protein>
    <recommendedName>
        <fullName>Atypical chemokine receptor 1</fullName>
    </recommendedName>
    <alternativeName>
        <fullName>Duffy antigen/chemokine receptor</fullName>
    </alternativeName>
    <cdAntigenName>CD234</cdAntigenName>
</protein>
<dbReference type="EMBL" id="AF109158">
    <property type="protein sequence ID" value="AAG31021.1"/>
    <property type="molecule type" value="Genomic_DNA"/>
</dbReference>
<dbReference type="EMBL" id="BT021079">
    <property type="protein sequence ID" value="AAX09096.1"/>
    <property type="molecule type" value="mRNA"/>
</dbReference>
<dbReference type="EMBL" id="BC142464">
    <property type="protein sequence ID" value="AAI42465.1"/>
    <property type="molecule type" value="mRNA"/>
</dbReference>
<dbReference type="RefSeq" id="NP_001015634.1">
    <property type="nucleotide sequence ID" value="NM_001015634.1"/>
</dbReference>
<dbReference type="SMR" id="Q9GLX0"/>
<dbReference type="FunCoup" id="Q9GLX0">
    <property type="interactions" value="10"/>
</dbReference>
<dbReference type="STRING" id="9913.ENSBTAP00000004179"/>
<dbReference type="GlyCosmos" id="Q9GLX0">
    <property type="glycosylation" value="3 sites, No reported glycans"/>
</dbReference>
<dbReference type="GlyGen" id="Q9GLX0">
    <property type="glycosylation" value="3 sites"/>
</dbReference>
<dbReference type="PaxDb" id="9913-ENSBTAP00000004179"/>
<dbReference type="GeneID" id="528076"/>
<dbReference type="KEGG" id="bta:528076"/>
<dbReference type="CTD" id="2532"/>
<dbReference type="eggNOG" id="ENOG502SNW7">
    <property type="taxonomic scope" value="Eukaryota"/>
</dbReference>
<dbReference type="InParanoid" id="Q9GLX0"/>
<dbReference type="OrthoDB" id="9396544at2759"/>
<dbReference type="Proteomes" id="UP000009136">
    <property type="component" value="Unplaced"/>
</dbReference>
<dbReference type="GO" id="GO:0005769">
    <property type="term" value="C:early endosome"/>
    <property type="evidence" value="ECO:0007669"/>
    <property type="project" value="UniProtKB-SubCell"/>
</dbReference>
<dbReference type="GO" id="GO:0016020">
    <property type="term" value="C:membrane"/>
    <property type="evidence" value="ECO:0007669"/>
    <property type="project" value="UniProtKB-SubCell"/>
</dbReference>
<dbReference type="GO" id="GO:0055037">
    <property type="term" value="C:recycling endosome"/>
    <property type="evidence" value="ECO:0007669"/>
    <property type="project" value="UniProtKB-SubCell"/>
</dbReference>
<dbReference type="GO" id="GO:0019957">
    <property type="term" value="F:C-C chemokine binding"/>
    <property type="evidence" value="ECO:0000318"/>
    <property type="project" value="GO_Central"/>
</dbReference>
<dbReference type="GO" id="GO:0004930">
    <property type="term" value="F:G protein-coupled receptor activity"/>
    <property type="evidence" value="ECO:0007669"/>
    <property type="project" value="UniProtKB-KW"/>
</dbReference>
<dbReference type="GO" id="GO:0070098">
    <property type="term" value="P:chemokine-mediated signaling pathway"/>
    <property type="evidence" value="ECO:0007669"/>
    <property type="project" value="InterPro"/>
</dbReference>
<dbReference type="GO" id="GO:0006954">
    <property type="term" value="P:inflammatory response"/>
    <property type="evidence" value="ECO:0000318"/>
    <property type="project" value="GO_Central"/>
</dbReference>
<dbReference type="GO" id="GO:0032642">
    <property type="term" value="P:regulation of chemokine production"/>
    <property type="evidence" value="ECO:0000318"/>
    <property type="project" value="GO_Central"/>
</dbReference>
<dbReference type="CDD" id="cd15010">
    <property type="entry name" value="7tmA_ACKR1_DARC"/>
    <property type="match status" value="1"/>
</dbReference>
<dbReference type="FunFam" id="1.20.1070.10:FF:000266">
    <property type="entry name" value="Atypical chemokine receptor 1"/>
    <property type="match status" value="1"/>
</dbReference>
<dbReference type="Gene3D" id="1.20.1070.10">
    <property type="entry name" value="Rhodopsin 7-helix transmembrane proteins"/>
    <property type="match status" value="1"/>
</dbReference>
<dbReference type="InterPro" id="IPR005384">
    <property type="entry name" value="Duffy_chemokine_rcpt"/>
</dbReference>
<dbReference type="PANTHER" id="PTHR14181:SF1">
    <property type="entry name" value="ATYPICAL CHEMOKINE RECEPTOR 1"/>
    <property type="match status" value="1"/>
</dbReference>
<dbReference type="PANTHER" id="PTHR14181">
    <property type="entry name" value="DUFFY ANTIGEN/CHEMOKINE RECEPTOR"/>
    <property type="match status" value="1"/>
</dbReference>
<dbReference type="PRINTS" id="PR01559">
    <property type="entry name" value="DUFFYANTIGEN"/>
</dbReference>